<comment type="catalytic activity">
    <reaction evidence="1">
        <text>L-methionyl-[protein] + [thioredoxin]-disulfide + H2O = L-methionyl-(R)-S-oxide-[protein] + [thioredoxin]-dithiol</text>
        <dbReference type="Rhea" id="RHEA:24164"/>
        <dbReference type="Rhea" id="RHEA-COMP:10698"/>
        <dbReference type="Rhea" id="RHEA-COMP:10700"/>
        <dbReference type="Rhea" id="RHEA-COMP:12313"/>
        <dbReference type="Rhea" id="RHEA-COMP:12314"/>
        <dbReference type="ChEBI" id="CHEBI:15377"/>
        <dbReference type="ChEBI" id="CHEBI:16044"/>
        <dbReference type="ChEBI" id="CHEBI:29950"/>
        <dbReference type="ChEBI" id="CHEBI:45764"/>
        <dbReference type="ChEBI" id="CHEBI:50058"/>
        <dbReference type="EC" id="1.8.4.12"/>
    </reaction>
</comment>
<comment type="cofactor">
    <cofactor evidence="1">
        <name>Zn(2+)</name>
        <dbReference type="ChEBI" id="CHEBI:29105"/>
    </cofactor>
    <text evidence="1">Binds 1 zinc ion per subunit. The zinc ion is important for the structural integrity of the protein.</text>
</comment>
<comment type="similarity">
    <text evidence="1">Belongs to the MsrB Met sulfoxide reductase family.</text>
</comment>
<proteinExistence type="inferred from homology"/>
<evidence type="ECO:0000255" key="1">
    <source>
        <dbReference type="HAMAP-Rule" id="MF_01400"/>
    </source>
</evidence>
<evidence type="ECO:0000255" key="2">
    <source>
        <dbReference type="PROSITE-ProRule" id="PRU01126"/>
    </source>
</evidence>
<dbReference type="EC" id="1.8.4.12" evidence="1"/>
<dbReference type="EMBL" id="CU459141">
    <property type="protein sequence ID" value="CAM87050.1"/>
    <property type="molecule type" value="Genomic_DNA"/>
</dbReference>
<dbReference type="RefSeq" id="WP_000521160.1">
    <property type="nucleotide sequence ID" value="NZ_JBDGFB010000034.1"/>
</dbReference>
<dbReference type="SMR" id="B0VC45"/>
<dbReference type="EnsemblBacteria" id="CAM87050">
    <property type="protein sequence ID" value="CAM87050"/>
    <property type="gene ID" value="ABAYE2185"/>
</dbReference>
<dbReference type="GeneID" id="92893679"/>
<dbReference type="KEGG" id="aby:ABAYE2185"/>
<dbReference type="HOGENOM" id="CLU_031040_8_5_6"/>
<dbReference type="GO" id="GO:0005737">
    <property type="term" value="C:cytoplasm"/>
    <property type="evidence" value="ECO:0007669"/>
    <property type="project" value="TreeGrafter"/>
</dbReference>
<dbReference type="GO" id="GO:0033743">
    <property type="term" value="F:peptide-methionine (R)-S-oxide reductase activity"/>
    <property type="evidence" value="ECO:0007669"/>
    <property type="project" value="UniProtKB-UniRule"/>
</dbReference>
<dbReference type="GO" id="GO:0008270">
    <property type="term" value="F:zinc ion binding"/>
    <property type="evidence" value="ECO:0007669"/>
    <property type="project" value="UniProtKB-UniRule"/>
</dbReference>
<dbReference type="GO" id="GO:0030091">
    <property type="term" value="P:protein repair"/>
    <property type="evidence" value="ECO:0007669"/>
    <property type="project" value="InterPro"/>
</dbReference>
<dbReference type="GO" id="GO:0006979">
    <property type="term" value="P:response to oxidative stress"/>
    <property type="evidence" value="ECO:0007669"/>
    <property type="project" value="InterPro"/>
</dbReference>
<dbReference type="FunFam" id="2.170.150.20:FF:000001">
    <property type="entry name" value="Peptide methionine sulfoxide reductase MsrB"/>
    <property type="match status" value="1"/>
</dbReference>
<dbReference type="Gene3D" id="2.170.150.20">
    <property type="entry name" value="Peptide methionine sulfoxide reductase"/>
    <property type="match status" value="1"/>
</dbReference>
<dbReference type="HAMAP" id="MF_01400">
    <property type="entry name" value="MsrB"/>
    <property type="match status" value="1"/>
</dbReference>
<dbReference type="InterPro" id="IPR028427">
    <property type="entry name" value="Met_Sox_Rdtase_MsrB"/>
</dbReference>
<dbReference type="InterPro" id="IPR002579">
    <property type="entry name" value="Met_Sox_Rdtase_MsrB_dom"/>
</dbReference>
<dbReference type="InterPro" id="IPR011057">
    <property type="entry name" value="Mss4-like_sf"/>
</dbReference>
<dbReference type="NCBIfam" id="TIGR00357">
    <property type="entry name" value="peptide-methionine (R)-S-oxide reductase MsrB"/>
    <property type="match status" value="1"/>
</dbReference>
<dbReference type="PANTHER" id="PTHR10173">
    <property type="entry name" value="METHIONINE SULFOXIDE REDUCTASE"/>
    <property type="match status" value="1"/>
</dbReference>
<dbReference type="PANTHER" id="PTHR10173:SF52">
    <property type="entry name" value="METHIONINE-R-SULFOXIDE REDUCTASE B1"/>
    <property type="match status" value="1"/>
</dbReference>
<dbReference type="Pfam" id="PF01641">
    <property type="entry name" value="SelR"/>
    <property type="match status" value="1"/>
</dbReference>
<dbReference type="SUPFAM" id="SSF51316">
    <property type="entry name" value="Mss4-like"/>
    <property type="match status" value="1"/>
</dbReference>
<dbReference type="PROSITE" id="PS51790">
    <property type="entry name" value="MSRB"/>
    <property type="match status" value="1"/>
</dbReference>
<sequence length="139" mass="15909">MGKVNKTDREWQRELSPEEYRITRQKGTEPAFTGQYWNTKQHGTYVCRCCGAELFSSDAKYDSGCGWPSFFRPLNGSVIDEHEDLTHGMVRTEIVCHDCEAHLGHVFEDGPQPTGLRYCVNSASLQLKTQEKNDEETYP</sequence>
<protein>
    <recommendedName>
        <fullName evidence="1">Peptide methionine sulfoxide reductase MsrB</fullName>
        <ecNumber evidence="1">1.8.4.12</ecNumber>
    </recommendedName>
    <alternativeName>
        <fullName evidence="1">Peptide-methionine (R)-S-oxide reductase</fullName>
    </alternativeName>
</protein>
<name>MSRB_ACIBY</name>
<accession>B0VC45</accession>
<gene>
    <name evidence="1" type="primary">msrB</name>
    <name type="ordered locus">ABAYE2185</name>
</gene>
<keyword id="KW-0479">Metal-binding</keyword>
<keyword id="KW-0560">Oxidoreductase</keyword>
<keyword id="KW-0862">Zinc</keyword>
<feature type="chain" id="PRO_1000145348" description="Peptide methionine sulfoxide reductase MsrB">
    <location>
        <begin position="1"/>
        <end position="139"/>
    </location>
</feature>
<feature type="domain" description="MsrB" evidence="2">
    <location>
        <begin position="8"/>
        <end position="130"/>
    </location>
</feature>
<feature type="active site" description="Nucleophile" evidence="2">
    <location>
        <position position="119"/>
    </location>
</feature>
<feature type="binding site" evidence="2">
    <location>
        <position position="47"/>
    </location>
    <ligand>
        <name>Zn(2+)</name>
        <dbReference type="ChEBI" id="CHEBI:29105"/>
    </ligand>
</feature>
<feature type="binding site" evidence="2">
    <location>
        <position position="50"/>
    </location>
    <ligand>
        <name>Zn(2+)</name>
        <dbReference type="ChEBI" id="CHEBI:29105"/>
    </ligand>
</feature>
<feature type="binding site" evidence="2">
    <location>
        <position position="96"/>
    </location>
    <ligand>
        <name>Zn(2+)</name>
        <dbReference type="ChEBI" id="CHEBI:29105"/>
    </ligand>
</feature>
<feature type="binding site" evidence="2">
    <location>
        <position position="99"/>
    </location>
    <ligand>
        <name>Zn(2+)</name>
        <dbReference type="ChEBI" id="CHEBI:29105"/>
    </ligand>
</feature>
<reference key="1">
    <citation type="journal article" date="2008" name="PLoS ONE">
        <title>Comparative analysis of Acinetobacters: three genomes for three lifestyles.</title>
        <authorList>
            <person name="Vallenet D."/>
            <person name="Nordmann P."/>
            <person name="Barbe V."/>
            <person name="Poirel L."/>
            <person name="Mangenot S."/>
            <person name="Bataille E."/>
            <person name="Dossat C."/>
            <person name="Gas S."/>
            <person name="Kreimeyer A."/>
            <person name="Lenoble P."/>
            <person name="Oztas S."/>
            <person name="Poulain J."/>
            <person name="Segurens B."/>
            <person name="Robert C."/>
            <person name="Abergel C."/>
            <person name="Claverie J.-M."/>
            <person name="Raoult D."/>
            <person name="Medigue C."/>
            <person name="Weissenbach J."/>
            <person name="Cruveiller S."/>
        </authorList>
    </citation>
    <scope>NUCLEOTIDE SEQUENCE [LARGE SCALE GENOMIC DNA]</scope>
    <source>
        <strain>AYE</strain>
    </source>
</reference>
<organism>
    <name type="scientific">Acinetobacter baumannii (strain AYE)</name>
    <dbReference type="NCBI Taxonomy" id="509173"/>
    <lineage>
        <taxon>Bacteria</taxon>
        <taxon>Pseudomonadati</taxon>
        <taxon>Pseudomonadota</taxon>
        <taxon>Gammaproteobacteria</taxon>
        <taxon>Moraxellales</taxon>
        <taxon>Moraxellaceae</taxon>
        <taxon>Acinetobacter</taxon>
        <taxon>Acinetobacter calcoaceticus/baumannii complex</taxon>
    </lineage>
</organism>